<evidence type="ECO:0000255" key="1">
    <source>
        <dbReference type="PROSITE-ProRule" id="PRU01091"/>
    </source>
</evidence>
<evidence type="ECO:0000269" key="2">
    <source>
    </source>
</evidence>
<evidence type="ECO:0000269" key="3">
    <source>
    </source>
</evidence>
<evidence type="ECO:0000305" key="4"/>
<organism>
    <name type="scientific">Mycobacterium tuberculosis (strain ATCC 25618 / H37Rv)</name>
    <dbReference type="NCBI Taxonomy" id="83332"/>
    <lineage>
        <taxon>Bacteria</taxon>
        <taxon>Bacillati</taxon>
        <taxon>Actinomycetota</taxon>
        <taxon>Actinomycetes</taxon>
        <taxon>Mycobacteriales</taxon>
        <taxon>Mycobacteriaceae</taxon>
        <taxon>Mycobacterium</taxon>
        <taxon>Mycobacterium tuberculosis complex</taxon>
    </lineage>
</organism>
<proteinExistence type="evidence at protein level"/>
<keyword id="KW-0010">Activator</keyword>
<keyword id="KW-0238">DNA-binding</keyword>
<keyword id="KW-1185">Reference proteome</keyword>
<keyword id="KW-0804">Transcription</keyword>
<keyword id="KW-0805">Transcription regulation</keyword>
<gene>
    <name type="primary">moaR1</name>
    <name type="ordered locus">Rv3124</name>
</gene>
<dbReference type="EMBL" id="AL123456">
    <property type="protein sequence ID" value="CCP45934.1"/>
    <property type="status" value="ALT_INIT"/>
    <property type="molecule type" value="Genomic_DNA"/>
</dbReference>
<dbReference type="PIR" id="C70922">
    <property type="entry name" value="C70922"/>
</dbReference>
<dbReference type="RefSeq" id="NP_217640.1">
    <property type="nucleotide sequence ID" value="NC_000962.3"/>
</dbReference>
<dbReference type="SMR" id="O05797"/>
<dbReference type="STRING" id="83332.Rv3124"/>
<dbReference type="PaxDb" id="83332-Rv3124"/>
<dbReference type="DNASU" id="888825"/>
<dbReference type="GeneID" id="888825"/>
<dbReference type="KEGG" id="mtu:Rv3124"/>
<dbReference type="TubercuList" id="Rv3124"/>
<dbReference type="eggNOG" id="COG3629">
    <property type="taxonomic scope" value="Bacteria"/>
</dbReference>
<dbReference type="InParanoid" id="O05797"/>
<dbReference type="OrthoDB" id="4336084at2"/>
<dbReference type="Proteomes" id="UP000001584">
    <property type="component" value="Chromosome"/>
</dbReference>
<dbReference type="GO" id="GO:0003677">
    <property type="term" value="F:DNA binding"/>
    <property type="evidence" value="ECO:0000314"/>
    <property type="project" value="MTBBASE"/>
</dbReference>
<dbReference type="GO" id="GO:0032324">
    <property type="term" value="P:molybdopterin cofactor biosynthetic process"/>
    <property type="evidence" value="ECO:0000270"/>
    <property type="project" value="MTBBASE"/>
</dbReference>
<dbReference type="GO" id="GO:0000160">
    <property type="term" value="P:phosphorelay signal transduction system"/>
    <property type="evidence" value="ECO:0007669"/>
    <property type="project" value="InterPro"/>
</dbReference>
<dbReference type="GO" id="GO:0006355">
    <property type="term" value="P:regulation of DNA-templated transcription"/>
    <property type="evidence" value="ECO:0000270"/>
    <property type="project" value="MTBBASE"/>
</dbReference>
<dbReference type="CDD" id="cd15831">
    <property type="entry name" value="BTAD"/>
    <property type="match status" value="1"/>
</dbReference>
<dbReference type="FunFam" id="1.25.40.10:FF:000222">
    <property type="entry name" value="SARP family transcriptional regulator"/>
    <property type="match status" value="1"/>
</dbReference>
<dbReference type="FunFam" id="1.10.10.10:FF:000528">
    <property type="entry name" value="Transcriptional regulatory protein EmbR"/>
    <property type="match status" value="1"/>
</dbReference>
<dbReference type="Gene3D" id="1.25.40.10">
    <property type="entry name" value="Tetratricopeptide repeat domain"/>
    <property type="match status" value="1"/>
</dbReference>
<dbReference type="Gene3D" id="1.10.10.10">
    <property type="entry name" value="Winged helix-like DNA-binding domain superfamily/Winged helix DNA-binding domain"/>
    <property type="match status" value="1"/>
</dbReference>
<dbReference type="InterPro" id="IPR051677">
    <property type="entry name" value="AfsR-DnrI-RedD_regulator"/>
</dbReference>
<dbReference type="InterPro" id="IPR005158">
    <property type="entry name" value="BTAD"/>
</dbReference>
<dbReference type="InterPro" id="IPR001867">
    <property type="entry name" value="OmpR/PhoB-type_DNA-bd"/>
</dbReference>
<dbReference type="InterPro" id="IPR016032">
    <property type="entry name" value="Sig_transdc_resp-reg_C-effctor"/>
</dbReference>
<dbReference type="InterPro" id="IPR011990">
    <property type="entry name" value="TPR-like_helical_dom_sf"/>
</dbReference>
<dbReference type="InterPro" id="IPR036388">
    <property type="entry name" value="WH-like_DNA-bd_sf"/>
</dbReference>
<dbReference type="PANTHER" id="PTHR35807:SF1">
    <property type="entry name" value="TRANSCRIPTIONAL REGULATOR REDD"/>
    <property type="match status" value="1"/>
</dbReference>
<dbReference type="PANTHER" id="PTHR35807">
    <property type="entry name" value="TRANSCRIPTIONAL REGULATOR REDD-RELATED"/>
    <property type="match status" value="1"/>
</dbReference>
<dbReference type="Pfam" id="PF03704">
    <property type="entry name" value="BTAD"/>
    <property type="match status" value="1"/>
</dbReference>
<dbReference type="Pfam" id="PF00486">
    <property type="entry name" value="Trans_reg_C"/>
    <property type="match status" value="1"/>
</dbReference>
<dbReference type="SMART" id="SM01043">
    <property type="entry name" value="BTAD"/>
    <property type="match status" value="1"/>
</dbReference>
<dbReference type="SMART" id="SM00862">
    <property type="entry name" value="Trans_reg_C"/>
    <property type="match status" value="1"/>
</dbReference>
<dbReference type="SUPFAM" id="SSF46894">
    <property type="entry name" value="C-terminal effector domain of the bipartite response regulators"/>
    <property type="match status" value="1"/>
</dbReference>
<dbReference type="SUPFAM" id="SSF48452">
    <property type="entry name" value="TPR-like"/>
    <property type="match status" value="1"/>
</dbReference>
<dbReference type="PROSITE" id="PS51755">
    <property type="entry name" value="OMPR_PHOB"/>
    <property type="match status" value="1"/>
</dbReference>
<protein>
    <recommendedName>
        <fullName>Transcriptional regulatory protein MoaR1</fullName>
    </recommendedName>
    <alternativeName>
        <fullName>Molybdopterin biosynthesis positive regulator</fullName>
    </alternativeName>
</protein>
<comment type="function">
    <text evidence="3">Acts as a positive transcriptional regulator of the molybdopterin biosynthesis moa1 locus, promoting the expression of the moaA1B1C1D1 genes. Binds directly to the moaA1 promoter.</text>
</comment>
<comment type="induction">
    <text evidence="2">Expression of MoaR1 appears to be modulated by oxygen availability since it is up-regulated in both microaerophilic (NRP1) and anaerobic (NRP2) cultures compared with aerobic cultures; thus, seems to be up-regulated during the shift into the persistent state in the human host.</text>
</comment>
<comment type="similarity">
    <text evidence="4">Belongs to the AfsR/DnrI/RedD regulatory family.</text>
</comment>
<comment type="sequence caution" evidence="4">
    <conflict type="erroneous initiation">
        <sequence resource="EMBL-CDS" id="CCP45934"/>
    </conflict>
    <text>Truncated N-terminus.</text>
</comment>
<sequence length="311" mass="34525">MGQRPFSPNHRSGVLNATTAGAVQFNVLGPLELNLRGTKLPLGTPKQRAVLAMLLLSRNQVVAADALVQAIWEKSPPARARRTVHTYICNLRRTLSDAGVDSRNILVSEPPGYRLLIGDRQQCDLDRFVAAKESGLRASAKGYFSEAIRYLDSALQNWRGPVLGDLRSFMFVQMFSRALTEDELLVHTKLAEAAIACGRADVVIPKLERLVAMHPYRESLWKQLMLGYYVNEYQSAAIDAYHRLKSTLAEELGVEPAPTIRALYHKILRQLPMDDLVGRVTRGRVDLRGGNGAKVEELTESDKDLLPIGLA</sequence>
<feature type="chain" id="PRO_0000415513" description="Transcriptional regulatory protein MoaR1">
    <location>
        <begin position="1"/>
        <end position="311"/>
    </location>
</feature>
<feature type="DNA-binding region" description="OmpR/PhoB-type" evidence="1">
    <location>
        <begin position="15"/>
        <end position="117"/>
    </location>
</feature>
<feature type="mutagenesis site" description="Has no deleterious effect on the transcription of the moa1 locus." evidence="3">
    <original>G</original>
    <variation>A</variation>
    <location>
        <position position="112"/>
    </location>
</feature>
<feature type="mutagenesis site" description="Shows significantly reduced transcription of the moa1 locus." evidence="3">
    <original>Y</original>
    <variation>A</variation>
    <location>
        <position position="113"/>
    </location>
</feature>
<feature type="mutagenesis site" description="Has no deleterious effect on the transcription of the moa1 locus." evidence="3">
    <original>E</original>
    <variation>D</variation>
    <location>
        <position position="181"/>
    </location>
</feature>
<feature type="mutagenesis site" description="Completely disrupts protein function, as shown by the dramatic decrease of RNA levels for the moa1 locus." evidence="3">
    <original>E</original>
    <variation>I</variation>
    <variation>W</variation>
    <location>
        <position position="181"/>
    </location>
</feature>
<feature type="mutagenesis site" description="Shows reduced transcription of the moa1 locus." evidence="3">
    <original>E</original>
    <variation>Q</variation>
    <location>
        <position position="181"/>
    </location>
</feature>
<name>MOAR1_MYCTU</name>
<accession>O05797</accession>
<accession>L0TEE0</accession>
<reference key="1">
    <citation type="journal article" date="1998" name="Nature">
        <title>Deciphering the biology of Mycobacterium tuberculosis from the complete genome sequence.</title>
        <authorList>
            <person name="Cole S.T."/>
            <person name="Brosch R."/>
            <person name="Parkhill J."/>
            <person name="Garnier T."/>
            <person name="Churcher C.M."/>
            <person name="Harris D.E."/>
            <person name="Gordon S.V."/>
            <person name="Eiglmeier K."/>
            <person name="Gas S."/>
            <person name="Barry C.E. III"/>
            <person name="Tekaia F."/>
            <person name="Badcock K."/>
            <person name="Basham D."/>
            <person name="Brown D."/>
            <person name="Chillingworth T."/>
            <person name="Connor R."/>
            <person name="Davies R.M."/>
            <person name="Devlin K."/>
            <person name="Feltwell T."/>
            <person name="Gentles S."/>
            <person name="Hamlin N."/>
            <person name="Holroyd S."/>
            <person name="Hornsby T."/>
            <person name="Jagels K."/>
            <person name="Krogh A."/>
            <person name="McLean J."/>
            <person name="Moule S."/>
            <person name="Murphy L.D."/>
            <person name="Oliver S."/>
            <person name="Osborne J."/>
            <person name="Quail M.A."/>
            <person name="Rajandream M.A."/>
            <person name="Rogers J."/>
            <person name="Rutter S."/>
            <person name="Seeger K."/>
            <person name="Skelton S."/>
            <person name="Squares S."/>
            <person name="Squares R."/>
            <person name="Sulston J.E."/>
            <person name="Taylor K."/>
            <person name="Whitehead S."/>
            <person name="Barrell B.G."/>
        </authorList>
    </citation>
    <scope>NUCLEOTIDE SEQUENCE [LARGE SCALE GENOMIC DNA]</scope>
    <source>
        <strain>ATCC 25618 / H37Rv</strain>
    </source>
</reference>
<reference key="2">
    <citation type="journal article" date="2004" name="Tuberculosis">
        <title>Gene expression profile of Mycobacterium tuberculosis in a non-replicating state.</title>
        <authorList>
            <person name="Muttucumaru D.G."/>
            <person name="Roberts G."/>
            <person name="Hinds J."/>
            <person name="Stabler R.A."/>
            <person name="Parish T."/>
        </authorList>
    </citation>
    <scope>INDUCTION</scope>
    <source>
        <strain>ATCC 25618 / H37Rv</strain>
    </source>
</reference>
<reference key="3">
    <citation type="journal article" date="2010" name="Microbiology">
        <title>Characterization of the transcriptional regulator Rv3124 of Mycobacterium tuberculosis identifies it as a positive regulator of molybdopterin biosynthesis and defines the functional consequences of a non-synonymous SNP in the Mycobacterium bovis BCG orthologue.</title>
        <authorList>
            <person name="Mendoza Lopez P."/>
            <person name="Golby P."/>
            <person name="Wooff E."/>
            <person name="Nunez Garcia J."/>
            <person name="Garcia Pelayo M.C."/>
            <person name="Conlon K."/>
            <person name="Gema Camacho A."/>
            <person name="Hewinson R.G."/>
            <person name="Polaina J."/>
            <person name="Suarez Garcia A."/>
            <person name="Gordon S.V."/>
        </authorList>
    </citation>
    <scope>FUNCTION AS A TRANSCRIPTIONAL REGULATOR</scope>
    <scope>GENE NAME</scope>
    <scope>DNA-BINDING</scope>
    <scope>MUTAGENESIS OF GLY-112; TYR-113 AND GLU-181</scope>
    <source>
        <strain>ATCC 25618 / H37Rv</strain>
    </source>
</reference>